<feature type="chain" id="PRO_0000297343" description="3-methyl-2-oxobutanoate hydroxymethyltransferase">
    <location>
        <begin position="1"/>
        <end position="266"/>
    </location>
</feature>
<feature type="active site" description="Proton acceptor" evidence="1">
    <location>
        <position position="179"/>
    </location>
</feature>
<feature type="binding site" evidence="1">
    <location>
        <begin position="43"/>
        <end position="44"/>
    </location>
    <ligand>
        <name>3-methyl-2-oxobutanoate</name>
        <dbReference type="ChEBI" id="CHEBI:11851"/>
    </ligand>
</feature>
<feature type="binding site" evidence="1">
    <location>
        <position position="43"/>
    </location>
    <ligand>
        <name>Mg(2+)</name>
        <dbReference type="ChEBI" id="CHEBI:18420"/>
    </ligand>
</feature>
<feature type="binding site" evidence="1">
    <location>
        <position position="82"/>
    </location>
    <ligand>
        <name>3-methyl-2-oxobutanoate</name>
        <dbReference type="ChEBI" id="CHEBI:11851"/>
    </ligand>
</feature>
<feature type="binding site" evidence="1">
    <location>
        <position position="82"/>
    </location>
    <ligand>
        <name>Mg(2+)</name>
        <dbReference type="ChEBI" id="CHEBI:18420"/>
    </ligand>
</feature>
<feature type="binding site" evidence="1">
    <location>
        <position position="110"/>
    </location>
    <ligand>
        <name>3-methyl-2-oxobutanoate</name>
        <dbReference type="ChEBI" id="CHEBI:11851"/>
    </ligand>
</feature>
<feature type="binding site" evidence="1">
    <location>
        <position position="112"/>
    </location>
    <ligand>
        <name>Mg(2+)</name>
        <dbReference type="ChEBI" id="CHEBI:18420"/>
    </ligand>
</feature>
<evidence type="ECO:0000255" key="1">
    <source>
        <dbReference type="HAMAP-Rule" id="MF_00156"/>
    </source>
</evidence>
<organism>
    <name type="scientific">Psychrobacter arcticus (strain DSM 17307 / VKM B-2377 / 273-4)</name>
    <dbReference type="NCBI Taxonomy" id="259536"/>
    <lineage>
        <taxon>Bacteria</taxon>
        <taxon>Pseudomonadati</taxon>
        <taxon>Pseudomonadota</taxon>
        <taxon>Gammaproteobacteria</taxon>
        <taxon>Moraxellales</taxon>
        <taxon>Moraxellaceae</taxon>
        <taxon>Psychrobacter</taxon>
    </lineage>
</organism>
<name>PANB_PSYA2</name>
<proteinExistence type="inferred from homology"/>
<keyword id="KW-0963">Cytoplasm</keyword>
<keyword id="KW-0460">Magnesium</keyword>
<keyword id="KW-0479">Metal-binding</keyword>
<keyword id="KW-0566">Pantothenate biosynthesis</keyword>
<keyword id="KW-1185">Reference proteome</keyword>
<keyword id="KW-0808">Transferase</keyword>
<accession>Q4FVG8</accession>
<reference key="1">
    <citation type="journal article" date="2010" name="Appl. Environ. Microbiol.">
        <title>The genome sequence of Psychrobacter arcticus 273-4, a psychroactive Siberian permafrost bacterium, reveals mechanisms for adaptation to low-temperature growth.</title>
        <authorList>
            <person name="Ayala-del-Rio H.L."/>
            <person name="Chain P.S."/>
            <person name="Grzymski J.J."/>
            <person name="Ponder M.A."/>
            <person name="Ivanova N."/>
            <person name="Bergholz P.W."/>
            <person name="Di Bartolo G."/>
            <person name="Hauser L."/>
            <person name="Land M."/>
            <person name="Bakermans C."/>
            <person name="Rodrigues D."/>
            <person name="Klappenbach J."/>
            <person name="Zarka D."/>
            <person name="Larimer F."/>
            <person name="Richardson P."/>
            <person name="Murray A."/>
            <person name="Thomashow M."/>
            <person name="Tiedje J.M."/>
        </authorList>
    </citation>
    <scope>NUCLEOTIDE SEQUENCE [LARGE SCALE GENOMIC DNA]</scope>
    <source>
        <strain>DSM 17307 / VKM B-2377 / 273-4</strain>
    </source>
</reference>
<comment type="function">
    <text evidence="1">Catalyzes the reversible reaction in which hydroxymethyl group from 5,10-methylenetetrahydrofolate is transferred onto alpha-ketoisovalerate to form ketopantoate.</text>
</comment>
<comment type="catalytic activity">
    <reaction evidence="1">
        <text>3-methyl-2-oxobutanoate + (6R)-5,10-methylene-5,6,7,8-tetrahydrofolate + H2O = 2-dehydropantoate + (6S)-5,6,7,8-tetrahydrofolate</text>
        <dbReference type="Rhea" id="RHEA:11824"/>
        <dbReference type="ChEBI" id="CHEBI:11561"/>
        <dbReference type="ChEBI" id="CHEBI:11851"/>
        <dbReference type="ChEBI" id="CHEBI:15377"/>
        <dbReference type="ChEBI" id="CHEBI:15636"/>
        <dbReference type="ChEBI" id="CHEBI:57453"/>
        <dbReference type="EC" id="2.1.2.11"/>
    </reaction>
</comment>
<comment type="cofactor">
    <cofactor evidence="1">
        <name>Mg(2+)</name>
        <dbReference type="ChEBI" id="CHEBI:18420"/>
    </cofactor>
    <text evidence="1">Binds 1 Mg(2+) ion per subunit.</text>
</comment>
<comment type="pathway">
    <text evidence="1">Cofactor biosynthesis; (R)-pantothenate biosynthesis; (R)-pantoate from 3-methyl-2-oxobutanoate: step 1/2.</text>
</comment>
<comment type="subunit">
    <text evidence="1">Homodecamer; pentamer of dimers.</text>
</comment>
<comment type="subcellular location">
    <subcellularLocation>
        <location evidence="1">Cytoplasm</location>
    </subcellularLocation>
</comment>
<comment type="similarity">
    <text evidence="1">Belongs to the PanB family.</text>
</comment>
<gene>
    <name evidence="1" type="primary">panB</name>
    <name type="ordered locus">Psyc_0116</name>
</gene>
<sequence>MTTLSTLNKFKKDGTKFTCLTCYDAMFARMMEKAQIDTILIGDSLGMVVQGHDSTLPVTVDDMAYHTANVARSNKQALILADLPFMSYVTLPEAIANSRKLMQVGAHVIKIEGGSELCELVTMLAQAGTPTCVHLGLTPQSVNVFGGYKVQGRGDEAGQKLLDDAKAVVNAGAALLVLECVPAELAKAVTEAVAVPVIGIGAGADTDGQVLVMHDMLGMAHGRTPRFVHDFLTDERNTEHSIEGAFALYQQSVKEGSFPKEQHQFS</sequence>
<protein>
    <recommendedName>
        <fullName evidence="1">3-methyl-2-oxobutanoate hydroxymethyltransferase</fullName>
        <ecNumber evidence="1">2.1.2.11</ecNumber>
    </recommendedName>
    <alternativeName>
        <fullName evidence="1">Ketopantoate hydroxymethyltransferase</fullName>
        <shortName evidence="1">KPHMT</shortName>
    </alternativeName>
</protein>
<dbReference type="EC" id="2.1.2.11" evidence="1"/>
<dbReference type="EMBL" id="CP000082">
    <property type="protein sequence ID" value="AAZ17990.1"/>
    <property type="molecule type" value="Genomic_DNA"/>
</dbReference>
<dbReference type="RefSeq" id="WP_011279429.1">
    <property type="nucleotide sequence ID" value="NC_007204.1"/>
</dbReference>
<dbReference type="SMR" id="Q4FVG8"/>
<dbReference type="STRING" id="259536.Psyc_0116"/>
<dbReference type="KEGG" id="par:Psyc_0116"/>
<dbReference type="eggNOG" id="COG0413">
    <property type="taxonomic scope" value="Bacteria"/>
</dbReference>
<dbReference type="HOGENOM" id="CLU_036645_1_0_6"/>
<dbReference type="OrthoDB" id="9781789at2"/>
<dbReference type="UniPathway" id="UPA00028">
    <property type="reaction ID" value="UER00003"/>
</dbReference>
<dbReference type="Proteomes" id="UP000000546">
    <property type="component" value="Chromosome"/>
</dbReference>
<dbReference type="GO" id="GO:0005737">
    <property type="term" value="C:cytoplasm"/>
    <property type="evidence" value="ECO:0007669"/>
    <property type="project" value="UniProtKB-SubCell"/>
</dbReference>
<dbReference type="GO" id="GO:0003864">
    <property type="term" value="F:3-methyl-2-oxobutanoate hydroxymethyltransferase activity"/>
    <property type="evidence" value="ECO:0007669"/>
    <property type="project" value="UniProtKB-UniRule"/>
</dbReference>
<dbReference type="GO" id="GO:0000287">
    <property type="term" value="F:magnesium ion binding"/>
    <property type="evidence" value="ECO:0007669"/>
    <property type="project" value="TreeGrafter"/>
</dbReference>
<dbReference type="GO" id="GO:0015940">
    <property type="term" value="P:pantothenate biosynthetic process"/>
    <property type="evidence" value="ECO:0007669"/>
    <property type="project" value="UniProtKB-UniRule"/>
</dbReference>
<dbReference type="CDD" id="cd06557">
    <property type="entry name" value="KPHMT-like"/>
    <property type="match status" value="1"/>
</dbReference>
<dbReference type="FunFam" id="3.20.20.60:FF:000003">
    <property type="entry name" value="3-methyl-2-oxobutanoate hydroxymethyltransferase"/>
    <property type="match status" value="1"/>
</dbReference>
<dbReference type="Gene3D" id="3.20.20.60">
    <property type="entry name" value="Phosphoenolpyruvate-binding domains"/>
    <property type="match status" value="1"/>
</dbReference>
<dbReference type="HAMAP" id="MF_00156">
    <property type="entry name" value="PanB"/>
    <property type="match status" value="1"/>
</dbReference>
<dbReference type="InterPro" id="IPR003700">
    <property type="entry name" value="Pantoate_hydroxy_MeTrfase"/>
</dbReference>
<dbReference type="InterPro" id="IPR015813">
    <property type="entry name" value="Pyrv/PenolPyrv_kinase-like_dom"/>
</dbReference>
<dbReference type="InterPro" id="IPR040442">
    <property type="entry name" value="Pyrv_kinase-like_dom_sf"/>
</dbReference>
<dbReference type="NCBIfam" id="TIGR00222">
    <property type="entry name" value="panB"/>
    <property type="match status" value="1"/>
</dbReference>
<dbReference type="NCBIfam" id="NF001452">
    <property type="entry name" value="PRK00311.1"/>
    <property type="match status" value="1"/>
</dbReference>
<dbReference type="PANTHER" id="PTHR20881">
    <property type="entry name" value="3-METHYL-2-OXOBUTANOATE HYDROXYMETHYLTRANSFERASE"/>
    <property type="match status" value="1"/>
</dbReference>
<dbReference type="PANTHER" id="PTHR20881:SF0">
    <property type="entry name" value="3-METHYL-2-OXOBUTANOATE HYDROXYMETHYLTRANSFERASE"/>
    <property type="match status" value="1"/>
</dbReference>
<dbReference type="Pfam" id="PF02548">
    <property type="entry name" value="Pantoate_transf"/>
    <property type="match status" value="1"/>
</dbReference>
<dbReference type="PIRSF" id="PIRSF000388">
    <property type="entry name" value="Pantoate_hydroxy_MeTrfase"/>
    <property type="match status" value="1"/>
</dbReference>
<dbReference type="SUPFAM" id="SSF51621">
    <property type="entry name" value="Phosphoenolpyruvate/pyruvate domain"/>
    <property type="match status" value="1"/>
</dbReference>